<comment type="function">
    <text evidence="2">PPIases accelerate the folding of proteins. It catalyzes the cis-trans isomerization of proline imidic peptide bonds in oligopeptides.</text>
</comment>
<comment type="catalytic activity">
    <reaction evidence="2">
        <text>[protein]-peptidylproline (omega=180) = [protein]-peptidylproline (omega=0)</text>
        <dbReference type="Rhea" id="RHEA:16237"/>
        <dbReference type="Rhea" id="RHEA-COMP:10747"/>
        <dbReference type="Rhea" id="RHEA-COMP:10748"/>
        <dbReference type="ChEBI" id="CHEBI:83833"/>
        <dbReference type="ChEBI" id="CHEBI:83834"/>
        <dbReference type="EC" id="5.2.1.8"/>
    </reaction>
</comment>
<comment type="activity regulation">
    <text evidence="2">Binds cyclosporin A (CsA). CsA mediates some of its effects via an inhibitory action on PPIase.</text>
</comment>
<comment type="subcellular location">
    <subcellularLocation>
        <location>Cytoplasm</location>
    </subcellularLocation>
</comment>
<comment type="similarity">
    <text evidence="3">Belongs to the cyclophilin-type PPIase family. PPIase A subfamily.</text>
</comment>
<feature type="chain" id="PRO_0000064129" description="Peptidyl-prolyl cis-trans isomerase">
    <location>
        <begin position="1"/>
        <end position="162"/>
    </location>
</feature>
<feature type="domain" description="PPIase cyclophilin-type" evidence="1">
    <location>
        <begin position="5"/>
        <end position="161"/>
    </location>
</feature>
<protein>
    <recommendedName>
        <fullName>Peptidyl-prolyl cis-trans isomerase</fullName>
        <shortName>PPIase</shortName>
        <ecNumber evidence="2">5.2.1.8</ecNumber>
    </recommendedName>
    <alternativeName>
        <fullName>Cyclophilin</fullName>
        <shortName>CPH</shortName>
    </alternativeName>
    <alternativeName>
        <fullName>Cyclosporin A-binding protein</fullName>
    </alternativeName>
    <alternativeName>
        <fullName>Rotamase</fullName>
    </alternativeName>
</protein>
<sequence>MSTVYFDVSADGQKLGKITFKLYDDVVPKTAENFRALCTGEKGFGYKGSIFHRVIPQFMLQGGDFTNFNGTGGKSIYGTKFADENFVKRHDRPGLLSMANAGPNTNGSQFFITTVPCPWLDGKHVVFGEVTDGLDIVKKIESFGSGSGATSKKIVIEESGQL</sequence>
<organism>
    <name type="scientific">Candida albicans (strain SC5314 / ATCC MYA-2876)</name>
    <name type="common">Yeast</name>
    <dbReference type="NCBI Taxonomy" id="237561"/>
    <lineage>
        <taxon>Eukaryota</taxon>
        <taxon>Fungi</taxon>
        <taxon>Dikarya</taxon>
        <taxon>Ascomycota</taxon>
        <taxon>Saccharomycotina</taxon>
        <taxon>Pichiomycetes</taxon>
        <taxon>Debaryomycetaceae</taxon>
        <taxon>Candida/Lodderomyces clade</taxon>
        <taxon>Candida</taxon>
    </lineage>
</organism>
<accession>P22011</accession>
<accession>A0A1D8PR38</accession>
<accession>Q3MPA6</accession>
<accession>Q5AH66</accession>
<proteinExistence type="evidence at protein level"/>
<name>PPIA_CANAL</name>
<keyword id="KW-0963">Cytoplasm</keyword>
<keyword id="KW-0413">Isomerase</keyword>
<keyword id="KW-1185">Reference proteome</keyword>
<keyword id="KW-0697">Rotamase</keyword>
<gene>
    <name type="primary">CYP1</name>
    <name type="ordered locus">CAALFM_C702380CA</name>
    <name type="ORF">CaJ7.0279</name>
    <name type="ORF">CaO19.13826</name>
    <name type="ORF">CaO19.6472</name>
</gene>
<reference key="1">
    <citation type="journal article" date="1990" name="Gene">
        <title>A Candida albicans homolog of a human cyclophilin gene encodes a peptidyl-prolyl cis-trans isomerase.</title>
        <authorList>
            <person name="Koser P.L."/>
            <person name="Livi G.P."/>
            <person name="Levy M.A."/>
            <person name="Rosenberg M."/>
            <person name="Bergsma D.J."/>
        </authorList>
    </citation>
    <scope>NUCLEOTIDE SEQUENCE [GENOMIC DNA]</scope>
    <scope>FUNCTION</scope>
    <scope>CATALYTIC ACTIVITY</scope>
    <scope>ACTIVITY REGULATION</scope>
</reference>
<reference key="2">
    <citation type="journal article" date="2005" name="Genetics">
        <title>Sequence finishing and gene mapping for Candida albicans chromosome 7 and syntenic analysis against the Saccharomyces cerevisiae genome.</title>
        <authorList>
            <person name="Chibana H."/>
            <person name="Oka N."/>
            <person name="Nakayama H."/>
            <person name="Aoyama T."/>
            <person name="Magee B.B."/>
            <person name="Magee P.T."/>
            <person name="Mikami Y."/>
        </authorList>
    </citation>
    <scope>NUCLEOTIDE SEQUENCE [LARGE SCALE GENOMIC DNA]</scope>
    <source>
        <strain>SC5314 / ATCC MYA-2876</strain>
    </source>
</reference>
<reference key="3">
    <citation type="journal article" date="2004" name="Proc. Natl. Acad. Sci. U.S.A.">
        <title>The diploid genome sequence of Candida albicans.</title>
        <authorList>
            <person name="Jones T."/>
            <person name="Federspiel N.A."/>
            <person name="Chibana H."/>
            <person name="Dungan J."/>
            <person name="Kalman S."/>
            <person name="Magee B.B."/>
            <person name="Newport G."/>
            <person name="Thorstenson Y.R."/>
            <person name="Agabian N."/>
            <person name="Magee P.T."/>
            <person name="Davis R.W."/>
            <person name="Scherer S."/>
        </authorList>
    </citation>
    <scope>NUCLEOTIDE SEQUENCE [LARGE SCALE GENOMIC DNA]</scope>
    <source>
        <strain>SC5314 / ATCC MYA-2876</strain>
    </source>
</reference>
<reference key="4">
    <citation type="journal article" date="2007" name="Genome Biol.">
        <title>Assembly of the Candida albicans genome into sixteen supercontigs aligned on the eight chromosomes.</title>
        <authorList>
            <person name="van het Hoog M."/>
            <person name="Rast T.J."/>
            <person name="Martchenko M."/>
            <person name="Grindle S."/>
            <person name="Dignard D."/>
            <person name="Hogues H."/>
            <person name="Cuomo C."/>
            <person name="Berriman M."/>
            <person name="Scherer S."/>
            <person name="Magee B.B."/>
            <person name="Whiteway M."/>
            <person name="Chibana H."/>
            <person name="Nantel A."/>
            <person name="Magee P.T."/>
        </authorList>
    </citation>
    <scope>GENOME REANNOTATION</scope>
    <source>
        <strain>SC5314 / ATCC MYA-2876</strain>
    </source>
</reference>
<reference key="5">
    <citation type="journal article" date="2013" name="Genome Biol.">
        <title>Assembly of a phased diploid Candida albicans genome facilitates allele-specific measurements and provides a simple model for repeat and indel structure.</title>
        <authorList>
            <person name="Muzzey D."/>
            <person name="Schwartz K."/>
            <person name="Weissman J.S."/>
            <person name="Sherlock G."/>
        </authorList>
    </citation>
    <scope>NUCLEOTIDE SEQUENCE [LARGE SCALE GENOMIC DNA]</scope>
    <scope>GENOME REANNOTATION</scope>
    <source>
        <strain>SC5314 / ATCC MYA-2876</strain>
    </source>
</reference>
<dbReference type="EC" id="5.2.1.8" evidence="2"/>
<dbReference type="EMBL" id="M60628">
    <property type="protein sequence ID" value="AAA34336.1"/>
    <property type="molecule type" value="Genomic_DNA"/>
</dbReference>
<dbReference type="EMBL" id="AP006852">
    <property type="protein sequence ID" value="BAE44754.1"/>
    <property type="molecule type" value="Genomic_DNA"/>
</dbReference>
<dbReference type="EMBL" id="CP017629">
    <property type="protein sequence ID" value="AOW30599.1"/>
    <property type="molecule type" value="Genomic_DNA"/>
</dbReference>
<dbReference type="PIR" id="JQ0888">
    <property type="entry name" value="CSCK"/>
</dbReference>
<dbReference type="RefSeq" id="XP_721313.1">
    <property type="nucleotide sequence ID" value="XM_716220.2"/>
</dbReference>
<dbReference type="SMR" id="P22011"/>
<dbReference type="BioGRID" id="1220072">
    <property type="interactions" value="1"/>
</dbReference>
<dbReference type="FunCoup" id="P22011">
    <property type="interactions" value="669"/>
</dbReference>
<dbReference type="STRING" id="237561.P22011"/>
<dbReference type="Allergome" id="799">
    <property type="allergen name" value="Cand a CyP"/>
</dbReference>
<dbReference type="EnsemblFungi" id="C7_02380C_A-T">
    <property type="protein sequence ID" value="C7_02380C_A-T-p1"/>
    <property type="gene ID" value="C7_02380C_A"/>
</dbReference>
<dbReference type="GeneID" id="3636978"/>
<dbReference type="KEGG" id="cal:CAALFM_C702380CA"/>
<dbReference type="CGD" id="CAL0000183095">
    <property type="gene designation" value="CYP1"/>
</dbReference>
<dbReference type="VEuPathDB" id="FungiDB:C7_02380C_A"/>
<dbReference type="eggNOG" id="KOG0865">
    <property type="taxonomic scope" value="Eukaryota"/>
</dbReference>
<dbReference type="HOGENOM" id="CLU_012062_4_2_1"/>
<dbReference type="InParanoid" id="P22011"/>
<dbReference type="OMA" id="FKSIVPR"/>
<dbReference type="OrthoDB" id="193499at2759"/>
<dbReference type="Proteomes" id="UP000000559">
    <property type="component" value="Chromosome 7"/>
</dbReference>
<dbReference type="GO" id="GO:0005737">
    <property type="term" value="C:cytoplasm"/>
    <property type="evidence" value="ECO:0000318"/>
    <property type="project" value="GO_Central"/>
</dbReference>
<dbReference type="GO" id="GO:0062040">
    <property type="term" value="C:fungal biofilm matrix"/>
    <property type="evidence" value="ECO:0000314"/>
    <property type="project" value="CGD"/>
</dbReference>
<dbReference type="GO" id="GO:0005758">
    <property type="term" value="C:mitochondrial intermembrane space"/>
    <property type="evidence" value="ECO:0007669"/>
    <property type="project" value="EnsemblFungi"/>
</dbReference>
<dbReference type="GO" id="GO:0034967">
    <property type="term" value="C:Set3 complex"/>
    <property type="evidence" value="ECO:0007669"/>
    <property type="project" value="EnsemblFungi"/>
</dbReference>
<dbReference type="GO" id="GO:0030445">
    <property type="term" value="C:yeast-form cell wall"/>
    <property type="evidence" value="ECO:0000314"/>
    <property type="project" value="CGD"/>
</dbReference>
<dbReference type="GO" id="GO:0016018">
    <property type="term" value="F:cyclosporin A binding"/>
    <property type="evidence" value="ECO:0000318"/>
    <property type="project" value="GO_Central"/>
</dbReference>
<dbReference type="GO" id="GO:0003755">
    <property type="term" value="F:peptidyl-prolyl cis-trans isomerase activity"/>
    <property type="evidence" value="ECO:0000314"/>
    <property type="project" value="CGD"/>
</dbReference>
<dbReference type="GO" id="GO:0030437">
    <property type="term" value="P:ascospore formation"/>
    <property type="evidence" value="ECO:0007669"/>
    <property type="project" value="EnsemblFungi"/>
</dbReference>
<dbReference type="GO" id="GO:0045835">
    <property type="term" value="P:negative regulation of meiotic nuclear division"/>
    <property type="evidence" value="ECO:0007669"/>
    <property type="project" value="EnsemblFungi"/>
</dbReference>
<dbReference type="GO" id="GO:0045836">
    <property type="term" value="P:positive regulation of meiotic nuclear division"/>
    <property type="evidence" value="ECO:0007669"/>
    <property type="project" value="EnsemblFungi"/>
</dbReference>
<dbReference type="GO" id="GO:0006457">
    <property type="term" value="P:protein folding"/>
    <property type="evidence" value="ECO:0000318"/>
    <property type="project" value="GO_Central"/>
</dbReference>
<dbReference type="CDD" id="cd01926">
    <property type="entry name" value="cyclophilin_ABH_like"/>
    <property type="match status" value="1"/>
</dbReference>
<dbReference type="FunFam" id="2.40.100.10:FF:000013">
    <property type="entry name" value="Peptidyl-prolyl cis-trans isomerase"/>
    <property type="match status" value="1"/>
</dbReference>
<dbReference type="Gene3D" id="2.40.100.10">
    <property type="entry name" value="Cyclophilin-like"/>
    <property type="match status" value="1"/>
</dbReference>
<dbReference type="InterPro" id="IPR029000">
    <property type="entry name" value="Cyclophilin-like_dom_sf"/>
</dbReference>
<dbReference type="InterPro" id="IPR024936">
    <property type="entry name" value="Cyclophilin-type_PPIase"/>
</dbReference>
<dbReference type="InterPro" id="IPR020892">
    <property type="entry name" value="Cyclophilin-type_PPIase_CS"/>
</dbReference>
<dbReference type="InterPro" id="IPR002130">
    <property type="entry name" value="Cyclophilin-type_PPIase_dom"/>
</dbReference>
<dbReference type="PANTHER" id="PTHR11071">
    <property type="entry name" value="PEPTIDYL-PROLYL CIS-TRANS ISOMERASE"/>
    <property type="match status" value="1"/>
</dbReference>
<dbReference type="PANTHER" id="PTHR11071:SF561">
    <property type="entry name" value="PEPTIDYL-PROLYL CIS-TRANS ISOMERASE D-RELATED"/>
    <property type="match status" value="1"/>
</dbReference>
<dbReference type="Pfam" id="PF00160">
    <property type="entry name" value="Pro_isomerase"/>
    <property type="match status" value="1"/>
</dbReference>
<dbReference type="PIRSF" id="PIRSF001467">
    <property type="entry name" value="Peptidylpro_ismrse"/>
    <property type="match status" value="1"/>
</dbReference>
<dbReference type="PRINTS" id="PR00153">
    <property type="entry name" value="CSAPPISMRASE"/>
</dbReference>
<dbReference type="SUPFAM" id="SSF50891">
    <property type="entry name" value="Cyclophilin-like"/>
    <property type="match status" value="1"/>
</dbReference>
<dbReference type="PROSITE" id="PS00170">
    <property type="entry name" value="CSA_PPIASE_1"/>
    <property type="match status" value="1"/>
</dbReference>
<dbReference type="PROSITE" id="PS50072">
    <property type="entry name" value="CSA_PPIASE_2"/>
    <property type="match status" value="1"/>
</dbReference>
<evidence type="ECO:0000255" key="1">
    <source>
        <dbReference type="PROSITE-ProRule" id="PRU00156"/>
    </source>
</evidence>
<evidence type="ECO:0000269" key="2">
    <source>
    </source>
</evidence>
<evidence type="ECO:0000305" key="3"/>